<keyword id="KW-0004">4Fe-4S</keyword>
<keyword id="KW-0963">Cytoplasm</keyword>
<keyword id="KW-0408">Iron</keyword>
<keyword id="KW-0411">Iron-sulfur</keyword>
<keyword id="KW-0479">Metal-binding</keyword>
<keyword id="KW-0949">S-adenosyl-L-methionine</keyword>
<keyword id="KW-0808">Transferase</keyword>
<keyword id="KW-0819">tRNA processing</keyword>
<reference key="1">
    <citation type="submission" date="2007-03" db="EMBL/GenBank/DDBJ databases">
        <authorList>
            <person name="Heidelberg J."/>
        </authorList>
    </citation>
    <scope>NUCLEOTIDE SEQUENCE [LARGE SCALE GENOMIC DNA]</scope>
    <source>
        <strain>ATCC 39541 / Classical Ogawa 395 / O395</strain>
    </source>
</reference>
<reference key="2">
    <citation type="journal article" date="2008" name="PLoS ONE">
        <title>A recalibrated molecular clock and independent origins for the cholera pandemic clones.</title>
        <authorList>
            <person name="Feng L."/>
            <person name="Reeves P.R."/>
            <person name="Lan R."/>
            <person name="Ren Y."/>
            <person name="Gao C."/>
            <person name="Zhou Z."/>
            <person name="Ren Y."/>
            <person name="Cheng J."/>
            <person name="Wang W."/>
            <person name="Wang J."/>
            <person name="Qian W."/>
            <person name="Li D."/>
            <person name="Wang L."/>
        </authorList>
    </citation>
    <scope>NUCLEOTIDE SEQUENCE [LARGE SCALE GENOMIC DNA]</scope>
    <source>
        <strain>ATCC 39541 / Classical Ogawa 395 / O395</strain>
    </source>
</reference>
<evidence type="ECO:0000255" key="1">
    <source>
        <dbReference type="HAMAP-Rule" id="MF_01864"/>
    </source>
</evidence>
<evidence type="ECO:0000255" key="2">
    <source>
        <dbReference type="PROSITE-ProRule" id="PRU01266"/>
    </source>
</evidence>
<evidence type="ECO:0000256" key="3">
    <source>
        <dbReference type="SAM" id="MobiDB-lite"/>
    </source>
</evidence>
<name>MIAB_VIBC3</name>
<feature type="chain" id="PRO_0000374630" description="tRNA-2-methylthio-N(6)-dimethylallyladenosine synthase">
    <location>
        <begin position="1"/>
        <end position="474"/>
    </location>
</feature>
<feature type="domain" description="MTTase N-terminal" evidence="1">
    <location>
        <begin position="3"/>
        <end position="120"/>
    </location>
</feature>
<feature type="domain" description="Radical SAM core" evidence="2">
    <location>
        <begin position="143"/>
        <end position="375"/>
    </location>
</feature>
<feature type="domain" description="TRAM" evidence="1">
    <location>
        <begin position="378"/>
        <end position="441"/>
    </location>
</feature>
<feature type="region of interest" description="Disordered" evidence="3">
    <location>
        <begin position="455"/>
        <end position="474"/>
    </location>
</feature>
<feature type="compositionally biased region" description="Basic and acidic residues" evidence="3">
    <location>
        <begin position="457"/>
        <end position="466"/>
    </location>
</feature>
<feature type="binding site" evidence="1">
    <location>
        <position position="12"/>
    </location>
    <ligand>
        <name>[4Fe-4S] cluster</name>
        <dbReference type="ChEBI" id="CHEBI:49883"/>
        <label>1</label>
    </ligand>
</feature>
<feature type="binding site" evidence="1">
    <location>
        <position position="49"/>
    </location>
    <ligand>
        <name>[4Fe-4S] cluster</name>
        <dbReference type="ChEBI" id="CHEBI:49883"/>
        <label>1</label>
    </ligand>
</feature>
<feature type="binding site" evidence="1">
    <location>
        <position position="83"/>
    </location>
    <ligand>
        <name>[4Fe-4S] cluster</name>
        <dbReference type="ChEBI" id="CHEBI:49883"/>
        <label>1</label>
    </ligand>
</feature>
<feature type="binding site" evidence="1">
    <location>
        <position position="157"/>
    </location>
    <ligand>
        <name>[4Fe-4S] cluster</name>
        <dbReference type="ChEBI" id="CHEBI:49883"/>
        <label>2</label>
        <note>4Fe-4S-S-AdoMet</note>
    </ligand>
</feature>
<feature type="binding site" evidence="1">
    <location>
        <position position="161"/>
    </location>
    <ligand>
        <name>[4Fe-4S] cluster</name>
        <dbReference type="ChEBI" id="CHEBI:49883"/>
        <label>2</label>
        <note>4Fe-4S-S-AdoMet</note>
    </ligand>
</feature>
<feature type="binding site" evidence="1">
    <location>
        <position position="164"/>
    </location>
    <ligand>
        <name>[4Fe-4S] cluster</name>
        <dbReference type="ChEBI" id="CHEBI:49883"/>
        <label>2</label>
        <note>4Fe-4S-S-AdoMet</note>
    </ligand>
</feature>
<proteinExistence type="inferred from homology"/>
<sequence>MSKKLLIKTWGCQMNEYDSSKMADLLNAANGYELTEIPEEADVLLLNTCSIREKAQEKVFHQLGRWKTLKDKKPGVVIGVGGCVATQEGDSIRDRAPYVDVIFGPQTLHRLPEMIKQSQTSDAPVMDISFPEIEKFDRLPEPRAEGPTAFVSIMEGCSKYCTYCVVPYTRGEEVSRPMDDVLFEIAQLAEQGVREVNLLGQNVNAYRGATHDGGICSFAELLRLVATIDGIDRIRFTTSHPLEFTDDIIAVYEDTPELVSFLHLPVQSGSDRILTMMKRPHTAIEYKSIIRKLRKARPDIQISSDFIVGFPGETDKDFQDTMKLIRDVDFDMSFSFIFSPRPGTPAADYPCDLSEEVKKERLYELQQQINSQAMRYSRLMLGTEQRILVEGPSKKDLMELRGRTENNRVVNFEGSPDLIGQFVDVKIVDVFPNSLRGELLRTEQEMNLRIATSPSEMKAKTRREDELGVATFTP</sequence>
<comment type="function">
    <text evidence="1">Catalyzes the methylthiolation of N6-(dimethylallyl)adenosine (i(6)A), leading to the formation of 2-methylthio-N6-(dimethylallyl)adenosine (ms(2)i(6)A) at position 37 in tRNAs that read codons beginning with uridine.</text>
</comment>
<comment type="catalytic activity">
    <reaction evidence="1">
        <text>N(6)-dimethylallyladenosine(37) in tRNA + (sulfur carrier)-SH + AH2 + 2 S-adenosyl-L-methionine = 2-methylsulfanyl-N(6)-dimethylallyladenosine(37) in tRNA + (sulfur carrier)-H + 5'-deoxyadenosine + L-methionine + A + S-adenosyl-L-homocysteine + 2 H(+)</text>
        <dbReference type="Rhea" id="RHEA:37067"/>
        <dbReference type="Rhea" id="RHEA-COMP:10375"/>
        <dbReference type="Rhea" id="RHEA-COMP:10376"/>
        <dbReference type="Rhea" id="RHEA-COMP:14737"/>
        <dbReference type="Rhea" id="RHEA-COMP:14739"/>
        <dbReference type="ChEBI" id="CHEBI:13193"/>
        <dbReference type="ChEBI" id="CHEBI:15378"/>
        <dbReference type="ChEBI" id="CHEBI:17319"/>
        <dbReference type="ChEBI" id="CHEBI:17499"/>
        <dbReference type="ChEBI" id="CHEBI:29917"/>
        <dbReference type="ChEBI" id="CHEBI:57844"/>
        <dbReference type="ChEBI" id="CHEBI:57856"/>
        <dbReference type="ChEBI" id="CHEBI:59789"/>
        <dbReference type="ChEBI" id="CHEBI:64428"/>
        <dbReference type="ChEBI" id="CHEBI:74415"/>
        <dbReference type="ChEBI" id="CHEBI:74417"/>
        <dbReference type="EC" id="2.8.4.3"/>
    </reaction>
</comment>
<comment type="cofactor">
    <cofactor evidence="1">
        <name>[4Fe-4S] cluster</name>
        <dbReference type="ChEBI" id="CHEBI:49883"/>
    </cofactor>
    <text evidence="1">Binds 2 [4Fe-4S] clusters. One cluster is coordinated with 3 cysteines and an exchangeable S-adenosyl-L-methionine.</text>
</comment>
<comment type="subunit">
    <text evidence="1">Monomer.</text>
</comment>
<comment type="subcellular location">
    <subcellularLocation>
        <location evidence="1">Cytoplasm</location>
    </subcellularLocation>
</comment>
<comment type="similarity">
    <text evidence="1">Belongs to the methylthiotransferase family. MiaB subfamily.</text>
</comment>
<dbReference type="EC" id="2.8.4.3" evidence="1"/>
<dbReference type="EMBL" id="CP000627">
    <property type="protein sequence ID" value="ABQ21901.1"/>
    <property type="molecule type" value="Genomic_DNA"/>
</dbReference>
<dbReference type="EMBL" id="CP001235">
    <property type="protein sequence ID" value="ACP08989.1"/>
    <property type="molecule type" value="Genomic_DNA"/>
</dbReference>
<dbReference type="RefSeq" id="WP_000038553.1">
    <property type="nucleotide sequence ID" value="NZ_JAACZH010000005.1"/>
</dbReference>
<dbReference type="SMR" id="A5F2X6"/>
<dbReference type="GeneID" id="69720334"/>
<dbReference type="KEGG" id="vco:VC0395_A0484"/>
<dbReference type="KEGG" id="vcr:VC395_0977"/>
<dbReference type="PATRIC" id="fig|345073.21.peg.947"/>
<dbReference type="eggNOG" id="COG0621">
    <property type="taxonomic scope" value="Bacteria"/>
</dbReference>
<dbReference type="HOGENOM" id="CLU_018697_2_0_6"/>
<dbReference type="OrthoDB" id="9805215at2"/>
<dbReference type="Proteomes" id="UP000000249">
    <property type="component" value="Chromosome 2"/>
</dbReference>
<dbReference type="GO" id="GO:0005829">
    <property type="term" value="C:cytosol"/>
    <property type="evidence" value="ECO:0007669"/>
    <property type="project" value="TreeGrafter"/>
</dbReference>
<dbReference type="GO" id="GO:0051539">
    <property type="term" value="F:4 iron, 4 sulfur cluster binding"/>
    <property type="evidence" value="ECO:0007669"/>
    <property type="project" value="UniProtKB-UniRule"/>
</dbReference>
<dbReference type="GO" id="GO:0046872">
    <property type="term" value="F:metal ion binding"/>
    <property type="evidence" value="ECO:0007669"/>
    <property type="project" value="UniProtKB-KW"/>
</dbReference>
<dbReference type="GO" id="GO:0035597">
    <property type="term" value="F:N6-isopentenyladenosine methylthiotransferase activity"/>
    <property type="evidence" value="ECO:0007669"/>
    <property type="project" value="TreeGrafter"/>
</dbReference>
<dbReference type="CDD" id="cd01335">
    <property type="entry name" value="Radical_SAM"/>
    <property type="match status" value="1"/>
</dbReference>
<dbReference type="FunFam" id="3.40.50.12160:FF:000001">
    <property type="entry name" value="tRNA-2-methylthio-N(6)-dimethylallyladenosine synthase"/>
    <property type="match status" value="1"/>
</dbReference>
<dbReference type="FunFam" id="3.80.30.20:FF:000001">
    <property type="entry name" value="tRNA-2-methylthio-N(6)-dimethylallyladenosine synthase 2"/>
    <property type="match status" value="1"/>
</dbReference>
<dbReference type="Gene3D" id="3.40.50.12160">
    <property type="entry name" value="Methylthiotransferase, N-terminal domain"/>
    <property type="match status" value="1"/>
</dbReference>
<dbReference type="Gene3D" id="3.80.30.20">
    <property type="entry name" value="tm_1862 like domain"/>
    <property type="match status" value="1"/>
</dbReference>
<dbReference type="HAMAP" id="MF_01864">
    <property type="entry name" value="tRNA_metthiotr_MiaB"/>
    <property type="match status" value="1"/>
</dbReference>
<dbReference type="InterPro" id="IPR006638">
    <property type="entry name" value="Elp3/MiaA/NifB-like_rSAM"/>
</dbReference>
<dbReference type="InterPro" id="IPR005839">
    <property type="entry name" value="Methylthiotransferase"/>
</dbReference>
<dbReference type="InterPro" id="IPR020612">
    <property type="entry name" value="Methylthiotransferase_CS"/>
</dbReference>
<dbReference type="InterPro" id="IPR013848">
    <property type="entry name" value="Methylthiotransferase_N"/>
</dbReference>
<dbReference type="InterPro" id="IPR038135">
    <property type="entry name" value="Methylthiotransferase_N_sf"/>
</dbReference>
<dbReference type="InterPro" id="IPR006463">
    <property type="entry name" value="MiaB_methiolase"/>
</dbReference>
<dbReference type="InterPro" id="IPR007197">
    <property type="entry name" value="rSAM"/>
</dbReference>
<dbReference type="InterPro" id="IPR023404">
    <property type="entry name" value="rSAM_horseshoe"/>
</dbReference>
<dbReference type="InterPro" id="IPR002792">
    <property type="entry name" value="TRAM_dom"/>
</dbReference>
<dbReference type="NCBIfam" id="TIGR01574">
    <property type="entry name" value="miaB-methiolase"/>
    <property type="match status" value="1"/>
</dbReference>
<dbReference type="NCBIfam" id="TIGR00089">
    <property type="entry name" value="MiaB/RimO family radical SAM methylthiotransferase"/>
    <property type="match status" value="1"/>
</dbReference>
<dbReference type="PANTHER" id="PTHR43020">
    <property type="entry name" value="CDK5 REGULATORY SUBUNIT-ASSOCIATED PROTEIN 1"/>
    <property type="match status" value="1"/>
</dbReference>
<dbReference type="PANTHER" id="PTHR43020:SF2">
    <property type="entry name" value="MITOCHONDRIAL TRNA METHYLTHIOTRANSFERASE CDK5RAP1"/>
    <property type="match status" value="1"/>
</dbReference>
<dbReference type="Pfam" id="PF04055">
    <property type="entry name" value="Radical_SAM"/>
    <property type="match status" value="1"/>
</dbReference>
<dbReference type="Pfam" id="PF01938">
    <property type="entry name" value="TRAM"/>
    <property type="match status" value="1"/>
</dbReference>
<dbReference type="Pfam" id="PF00919">
    <property type="entry name" value="UPF0004"/>
    <property type="match status" value="1"/>
</dbReference>
<dbReference type="SFLD" id="SFLDF00273">
    <property type="entry name" value="(dimethylallyl)adenosine_tRNA"/>
    <property type="match status" value="1"/>
</dbReference>
<dbReference type="SFLD" id="SFLDG01082">
    <property type="entry name" value="B12-binding_domain_containing"/>
    <property type="match status" value="1"/>
</dbReference>
<dbReference type="SFLD" id="SFLDS00029">
    <property type="entry name" value="Radical_SAM"/>
    <property type="match status" value="1"/>
</dbReference>
<dbReference type="SMART" id="SM00729">
    <property type="entry name" value="Elp3"/>
    <property type="match status" value="1"/>
</dbReference>
<dbReference type="SUPFAM" id="SSF102114">
    <property type="entry name" value="Radical SAM enzymes"/>
    <property type="match status" value="1"/>
</dbReference>
<dbReference type="PROSITE" id="PS51449">
    <property type="entry name" value="MTTASE_N"/>
    <property type="match status" value="1"/>
</dbReference>
<dbReference type="PROSITE" id="PS01278">
    <property type="entry name" value="MTTASE_RADICAL"/>
    <property type="match status" value="1"/>
</dbReference>
<dbReference type="PROSITE" id="PS51918">
    <property type="entry name" value="RADICAL_SAM"/>
    <property type="match status" value="1"/>
</dbReference>
<dbReference type="PROSITE" id="PS50926">
    <property type="entry name" value="TRAM"/>
    <property type="match status" value="1"/>
</dbReference>
<accession>A5F2X6</accession>
<accession>C3LYX3</accession>
<protein>
    <recommendedName>
        <fullName evidence="1">tRNA-2-methylthio-N(6)-dimethylallyladenosine synthase</fullName>
        <ecNumber evidence="1">2.8.4.3</ecNumber>
    </recommendedName>
    <alternativeName>
        <fullName evidence="1">(Dimethylallyl)adenosine tRNA methylthiotransferase MiaB</fullName>
    </alternativeName>
    <alternativeName>
        <fullName evidence="1">tRNA-i(6)A37 methylthiotransferase</fullName>
    </alternativeName>
</protein>
<gene>
    <name evidence="1" type="primary">miaB</name>
    <name type="ordered locus">VC0395_A0484</name>
    <name type="ordered locus">VC395_0977</name>
</gene>
<organism>
    <name type="scientific">Vibrio cholerae serotype O1 (strain ATCC 39541 / Classical Ogawa 395 / O395)</name>
    <dbReference type="NCBI Taxonomy" id="345073"/>
    <lineage>
        <taxon>Bacteria</taxon>
        <taxon>Pseudomonadati</taxon>
        <taxon>Pseudomonadota</taxon>
        <taxon>Gammaproteobacteria</taxon>
        <taxon>Vibrionales</taxon>
        <taxon>Vibrionaceae</taxon>
        <taxon>Vibrio</taxon>
    </lineage>
</organism>